<protein>
    <recommendedName>
        <fullName>Ornithine carbamoyltransferase</fullName>
        <shortName>OTCase</shortName>
        <ecNumber>2.1.3.3</ecNumber>
    </recommendedName>
</protein>
<evidence type="ECO:0000250" key="1"/>
<evidence type="ECO:0000305" key="2"/>
<reference key="1">
    <citation type="journal article" date="2003" name="Nature">
        <title>Unique physiological and pathogenic features of Leptospira interrogans revealed by whole-genome sequencing.</title>
        <authorList>
            <person name="Ren S.-X."/>
            <person name="Fu G."/>
            <person name="Jiang X.-G."/>
            <person name="Zeng R."/>
            <person name="Miao Y.-G."/>
            <person name="Xu H."/>
            <person name="Zhang Y.-X."/>
            <person name="Xiong H."/>
            <person name="Lu G."/>
            <person name="Lu L.-F."/>
            <person name="Jiang H.-Q."/>
            <person name="Jia J."/>
            <person name="Tu Y.-F."/>
            <person name="Jiang J.-X."/>
            <person name="Gu W.-Y."/>
            <person name="Zhang Y.-Q."/>
            <person name="Cai Z."/>
            <person name="Sheng H.-H."/>
            <person name="Yin H.-F."/>
            <person name="Zhang Y."/>
            <person name="Zhu G.-F."/>
            <person name="Wan M."/>
            <person name="Huang H.-L."/>
            <person name="Qian Z."/>
            <person name="Wang S.-Y."/>
            <person name="Ma W."/>
            <person name="Yao Z.-J."/>
            <person name="Shen Y."/>
            <person name="Qiang B.-Q."/>
            <person name="Xia Q.-C."/>
            <person name="Guo X.-K."/>
            <person name="Danchin A."/>
            <person name="Saint Girons I."/>
            <person name="Somerville R.L."/>
            <person name="Wen Y.-M."/>
            <person name="Shi M.-H."/>
            <person name="Chen Z."/>
            <person name="Xu J.-G."/>
            <person name="Zhao G.-P."/>
        </authorList>
    </citation>
    <scope>NUCLEOTIDE SEQUENCE [LARGE SCALE GENOMIC DNA]</scope>
    <source>
        <strain>56601</strain>
    </source>
</reference>
<name>OTC_LEPIN</name>
<accession>Q8F2D1</accession>
<keyword id="KW-0028">Amino-acid biosynthesis</keyword>
<keyword id="KW-0055">Arginine biosynthesis</keyword>
<keyword id="KW-0963">Cytoplasm</keyword>
<keyword id="KW-1185">Reference proteome</keyword>
<keyword id="KW-0808">Transferase</keyword>
<organism>
    <name type="scientific">Leptospira interrogans serogroup Icterohaemorrhagiae serovar Lai (strain 56601)</name>
    <dbReference type="NCBI Taxonomy" id="189518"/>
    <lineage>
        <taxon>Bacteria</taxon>
        <taxon>Pseudomonadati</taxon>
        <taxon>Spirochaetota</taxon>
        <taxon>Spirochaetia</taxon>
        <taxon>Leptospirales</taxon>
        <taxon>Leptospiraceae</taxon>
        <taxon>Leptospira</taxon>
    </lineage>
</organism>
<sequence length="311" mass="35416">MSESNVKHLISWEDWSDSEILDLLDFAIHVKKNRVNYAGHMSGRSLAMLFQKTSTRTRVSFEVAMTEMGGHGIYLDWMASNFQLSDIDLEARYLSRNVSVIMARLKKHEDLLTMRNGSQVPLINGCDNMFHPCQSLADIMTIALDKPEIPLNQIQLTYIGVHNNVVNSLIGITSALGIRLTLVTPIAEKENIHSQTVERAKAKGTLSWEENLKKAIQNADYVYTDTWLDMEFFNDPSYADKKKQRMELMMPYQINSSLLEKTNAKVMHDMPIHAGYEITREVVLGPRSIIFQQAENRLDAQKAVILKLLEA</sequence>
<gene>
    <name type="primary">argF</name>
    <name type="ordered locus">LA_2840</name>
</gene>
<proteinExistence type="inferred from homology"/>
<feature type="chain" id="PRO_0000112941" description="Ornithine carbamoyltransferase">
    <location>
        <begin position="1"/>
        <end position="311"/>
    </location>
</feature>
<feature type="binding site" evidence="1">
    <location>
        <begin position="54"/>
        <end position="58"/>
    </location>
    <ligand>
        <name>carbamoyl phosphate</name>
        <dbReference type="ChEBI" id="CHEBI:58228"/>
    </ligand>
</feature>
<feature type="binding site" evidence="1">
    <location>
        <position position="81"/>
    </location>
    <ligand>
        <name>carbamoyl phosphate</name>
        <dbReference type="ChEBI" id="CHEBI:58228"/>
    </ligand>
</feature>
<feature type="binding site" evidence="1">
    <location>
        <position position="104"/>
    </location>
    <ligand>
        <name>carbamoyl phosphate</name>
        <dbReference type="ChEBI" id="CHEBI:58228"/>
    </ligand>
</feature>
<feature type="binding site" evidence="1">
    <location>
        <begin position="131"/>
        <end position="134"/>
    </location>
    <ligand>
        <name>carbamoyl phosphate</name>
        <dbReference type="ChEBI" id="CHEBI:58228"/>
    </ligand>
</feature>
<feature type="binding site" evidence="1">
    <location>
        <position position="164"/>
    </location>
    <ligand>
        <name>L-ornithine</name>
        <dbReference type="ChEBI" id="CHEBI:46911"/>
    </ligand>
</feature>
<feature type="binding site" evidence="1">
    <location>
        <position position="225"/>
    </location>
    <ligand>
        <name>L-ornithine</name>
        <dbReference type="ChEBI" id="CHEBI:46911"/>
    </ligand>
</feature>
<feature type="binding site" evidence="1">
    <location>
        <begin position="229"/>
        <end position="230"/>
    </location>
    <ligand>
        <name>L-ornithine</name>
        <dbReference type="ChEBI" id="CHEBI:46911"/>
    </ligand>
</feature>
<feature type="binding site" evidence="1">
    <location>
        <begin position="268"/>
        <end position="271"/>
    </location>
    <ligand>
        <name>carbamoyl phosphate</name>
        <dbReference type="ChEBI" id="CHEBI:58228"/>
    </ligand>
</feature>
<feature type="binding site" evidence="1">
    <location>
        <position position="279"/>
    </location>
    <ligand>
        <name>carbamoyl phosphate</name>
        <dbReference type="ChEBI" id="CHEBI:58228"/>
    </ligand>
</feature>
<feature type="binding site" evidence="1">
    <location>
        <position position="297"/>
    </location>
    <ligand>
        <name>carbamoyl phosphate</name>
        <dbReference type="ChEBI" id="CHEBI:58228"/>
    </ligand>
</feature>
<feature type="site" description="Important for structural integrity" evidence="1">
    <location>
        <position position="31"/>
    </location>
</feature>
<comment type="function">
    <text evidence="1">Reversibly catalyzes the transfer of the carbamoyl group from carbamoyl phosphate (CP) to the N(epsilon) atom of ornithine (ORN) to produce L-citrulline.</text>
</comment>
<comment type="catalytic activity">
    <reaction>
        <text>carbamoyl phosphate + L-ornithine = L-citrulline + phosphate + H(+)</text>
        <dbReference type="Rhea" id="RHEA:19513"/>
        <dbReference type="ChEBI" id="CHEBI:15378"/>
        <dbReference type="ChEBI" id="CHEBI:43474"/>
        <dbReference type="ChEBI" id="CHEBI:46911"/>
        <dbReference type="ChEBI" id="CHEBI:57743"/>
        <dbReference type="ChEBI" id="CHEBI:58228"/>
        <dbReference type="EC" id="2.1.3.3"/>
    </reaction>
</comment>
<comment type="pathway">
    <text>Amino-acid biosynthesis; L-arginine biosynthesis; L-arginine from L-ornithine and carbamoyl phosphate: step 1/3.</text>
</comment>
<comment type="subcellular location">
    <subcellularLocation>
        <location evidence="1">Cytoplasm</location>
    </subcellularLocation>
</comment>
<comment type="similarity">
    <text evidence="2">Belongs to the aspartate/ornithine carbamoyltransferase superfamily. OTCase family.</text>
</comment>
<comment type="caution">
    <text evidence="2">Lacks the conserved cysteine and leucine residues in positions 269 and 270, respectively, which are part of the ornithine binding site; they are replaced by an aspartate and a methionine residue, respectively.</text>
</comment>
<dbReference type="EC" id="2.1.3.3"/>
<dbReference type="EMBL" id="AE010300">
    <property type="protein sequence ID" value="AAN50039.1"/>
    <property type="molecule type" value="Genomic_DNA"/>
</dbReference>
<dbReference type="RefSeq" id="NP_713021.1">
    <property type="nucleotide sequence ID" value="NC_004342.2"/>
</dbReference>
<dbReference type="RefSeq" id="WP_000004530.1">
    <property type="nucleotide sequence ID" value="NC_004342.2"/>
</dbReference>
<dbReference type="SMR" id="Q8F2D1"/>
<dbReference type="FunCoup" id="Q8F2D1">
    <property type="interactions" value="398"/>
</dbReference>
<dbReference type="STRING" id="189518.LA_2840"/>
<dbReference type="PaxDb" id="189518-LA_2840"/>
<dbReference type="EnsemblBacteria" id="AAN50039">
    <property type="protein sequence ID" value="AAN50039"/>
    <property type="gene ID" value="LA_2840"/>
</dbReference>
<dbReference type="KEGG" id="lil:LA_2840"/>
<dbReference type="PATRIC" id="fig|189518.3.peg.2822"/>
<dbReference type="HOGENOM" id="CLU_043846_3_2_12"/>
<dbReference type="InParanoid" id="Q8F2D1"/>
<dbReference type="OrthoDB" id="9802587at2"/>
<dbReference type="UniPathway" id="UPA00068">
    <property type="reaction ID" value="UER00112"/>
</dbReference>
<dbReference type="Proteomes" id="UP000001408">
    <property type="component" value="Chromosome I"/>
</dbReference>
<dbReference type="GO" id="GO:0005737">
    <property type="term" value="C:cytoplasm"/>
    <property type="evidence" value="ECO:0007669"/>
    <property type="project" value="UniProtKB-SubCell"/>
</dbReference>
<dbReference type="GO" id="GO:0016597">
    <property type="term" value="F:amino acid binding"/>
    <property type="evidence" value="ECO:0007669"/>
    <property type="project" value="InterPro"/>
</dbReference>
<dbReference type="GO" id="GO:0004585">
    <property type="term" value="F:ornithine carbamoyltransferase activity"/>
    <property type="evidence" value="ECO:0000318"/>
    <property type="project" value="GO_Central"/>
</dbReference>
<dbReference type="GO" id="GO:0042450">
    <property type="term" value="P:arginine biosynthetic process via ornithine"/>
    <property type="evidence" value="ECO:0000318"/>
    <property type="project" value="GO_Central"/>
</dbReference>
<dbReference type="GO" id="GO:0019240">
    <property type="term" value="P:citrulline biosynthetic process"/>
    <property type="evidence" value="ECO:0000318"/>
    <property type="project" value="GO_Central"/>
</dbReference>
<dbReference type="GO" id="GO:0006526">
    <property type="term" value="P:L-arginine biosynthetic process"/>
    <property type="evidence" value="ECO:0007669"/>
    <property type="project" value="UniProtKB-UniPathway"/>
</dbReference>
<dbReference type="FunFam" id="3.40.50.1370:FF:000026">
    <property type="entry name" value="Ornithine carbamoyltransferase"/>
    <property type="match status" value="1"/>
</dbReference>
<dbReference type="Gene3D" id="3.40.50.1370">
    <property type="entry name" value="Aspartate/ornithine carbamoyltransferase"/>
    <property type="match status" value="2"/>
</dbReference>
<dbReference type="InterPro" id="IPR006132">
    <property type="entry name" value="Asp/Orn_carbamoyltranf_P-bd"/>
</dbReference>
<dbReference type="InterPro" id="IPR006130">
    <property type="entry name" value="Asp/Orn_carbamoylTrfase"/>
</dbReference>
<dbReference type="InterPro" id="IPR036901">
    <property type="entry name" value="Asp/Orn_carbamoylTrfase_sf"/>
</dbReference>
<dbReference type="InterPro" id="IPR006131">
    <property type="entry name" value="Asp_carbamoyltransf_Asp/Orn-bd"/>
</dbReference>
<dbReference type="InterPro" id="IPR002292">
    <property type="entry name" value="Orn/put_carbamltrans"/>
</dbReference>
<dbReference type="NCBIfam" id="NF011379">
    <property type="entry name" value="PRK14804.1"/>
    <property type="match status" value="1"/>
</dbReference>
<dbReference type="PANTHER" id="PTHR45753">
    <property type="entry name" value="ORNITHINE CARBAMOYLTRANSFERASE, MITOCHONDRIAL"/>
    <property type="match status" value="1"/>
</dbReference>
<dbReference type="PANTHER" id="PTHR45753:SF3">
    <property type="entry name" value="ORNITHINE TRANSCARBAMYLASE, MITOCHONDRIAL"/>
    <property type="match status" value="1"/>
</dbReference>
<dbReference type="Pfam" id="PF00185">
    <property type="entry name" value="OTCace"/>
    <property type="match status" value="1"/>
</dbReference>
<dbReference type="Pfam" id="PF02729">
    <property type="entry name" value="OTCace_N"/>
    <property type="match status" value="1"/>
</dbReference>
<dbReference type="PRINTS" id="PR00100">
    <property type="entry name" value="AOTCASE"/>
</dbReference>
<dbReference type="PRINTS" id="PR00102">
    <property type="entry name" value="OTCASE"/>
</dbReference>
<dbReference type="SUPFAM" id="SSF53671">
    <property type="entry name" value="Aspartate/ornithine carbamoyltransferase"/>
    <property type="match status" value="1"/>
</dbReference>
<dbReference type="PROSITE" id="PS00097">
    <property type="entry name" value="CARBAMOYLTRANSFERASE"/>
    <property type="match status" value="1"/>
</dbReference>